<organism>
    <name type="scientific">Salmonella paratyphi A (strain ATCC 9150 / SARB42)</name>
    <dbReference type="NCBI Taxonomy" id="295319"/>
    <lineage>
        <taxon>Bacteria</taxon>
        <taxon>Pseudomonadati</taxon>
        <taxon>Pseudomonadota</taxon>
        <taxon>Gammaproteobacteria</taxon>
        <taxon>Enterobacterales</taxon>
        <taxon>Enterobacteriaceae</taxon>
        <taxon>Salmonella</taxon>
    </lineage>
</organism>
<feature type="chain" id="PRO_0000277522" description="UPF0253 protein YaeP">
    <location>
        <begin position="1"/>
        <end position="66"/>
    </location>
</feature>
<gene>
    <name evidence="1" type="primary">yaeP</name>
    <name type="ordered locus">SPA0245</name>
</gene>
<proteinExistence type="inferred from homology"/>
<sequence>MEKYCELVRKRYAEIASGDLGYVPDALGCVLKVLNEVAADSALSESVREKAAYAAANLLVSDYVNE</sequence>
<evidence type="ECO:0000255" key="1">
    <source>
        <dbReference type="HAMAP-Rule" id="MF_01064"/>
    </source>
</evidence>
<evidence type="ECO:0000305" key="2"/>
<name>YAEP_SALPA</name>
<reference key="1">
    <citation type="journal article" date="2004" name="Nat. Genet.">
        <title>Comparison of genome degradation in Paratyphi A and Typhi, human-restricted serovars of Salmonella enterica that cause typhoid.</title>
        <authorList>
            <person name="McClelland M."/>
            <person name="Sanderson K.E."/>
            <person name="Clifton S.W."/>
            <person name="Latreille P."/>
            <person name="Porwollik S."/>
            <person name="Sabo A."/>
            <person name="Meyer R."/>
            <person name="Bieri T."/>
            <person name="Ozersky P."/>
            <person name="McLellan M."/>
            <person name="Harkins C.R."/>
            <person name="Wang C."/>
            <person name="Nguyen C."/>
            <person name="Berghoff A."/>
            <person name="Elliott G."/>
            <person name="Kohlberg S."/>
            <person name="Strong C."/>
            <person name="Du F."/>
            <person name="Carter J."/>
            <person name="Kremizki C."/>
            <person name="Layman D."/>
            <person name="Leonard S."/>
            <person name="Sun H."/>
            <person name="Fulton L."/>
            <person name="Nash W."/>
            <person name="Miner T."/>
            <person name="Minx P."/>
            <person name="Delehaunty K."/>
            <person name="Fronick C."/>
            <person name="Magrini V."/>
            <person name="Nhan M."/>
            <person name="Warren W."/>
            <person name="Florea L."/>
            <person name="Spieth J."/>
            <person name="Wilson R.K."/>
        </authorList>
    </citation>
    <scope>NUCLEOTIDE SEQUENCE [LARGE SCALE GENOMIC DNA]</scope>
    <source>
        <strain>ATCC 9150 / SARB42</strain>
    </source>
</reference>
<protein>
    <recommendedName>
        <fullName evidence="1">UPF0253 protein YaeP</fullName>
    </recommendedName>
</protein>
<dbReference type="EMBL" id="CP000026">
    <property type="protein sequence ID" value="AAV76274.1"/>
    <property type="status" value="ALT_INIT"/>
    <property type="molecule type" value="Genomic_DNA"/>
</dbReference>
<dbReference type="RefSeq" id="WP_001518678.1">
    <property type="nucleotide sequence ID" value="NC_006511.1"/>
</dbReference>
<dbReference type="SMR" id="Q5PD84"/>
<dbReference type="KEGG" id="spt:SPA0245"/>
<dbReference type="HOGENOM" id="CLU_190008_0_0_6"/>
<dbReference type="Proteomes" id="UP000008185">
    <property type="component" value="Chromosome"/>
</dbReference>
<dbReference type="HAMAP" id="MF_01064">
    <property type="entry name" value="UPF0253"/>
    <property type="match status" value="1"/>
</dbReference>
<dbReference type="InterPro" id="IPR009624">
    <property type="entry name" value="UPF0253"/>
</dbReference>
<dbReference type="NCBIfam" id="NF003436">
    <property type="entry name" value="PRK04964.1"/>
    <property type="match status" value="1"/>
</dbReference>
<dbReference type="Pfam" id="PF06786">
    <property type="entry name" value="UPF0253"/>
    <property type="match status" value="1"/>
</dbReference>
<accession>Q5PD84</accession>
<comment type="similarity">
    <text evidence="1">Belongs to the UPF0253 family.</text>
</comment>
<comment type="sequence caution" evidence="2">
    <conflict type="erroneous initiation">
        <sequence resource="EMBL-CDS" id="AAV76274"/>
    </conflict>
</comment>